<proteinExistence type="inferred from homology"/>
<evidence type="ECO:0000255" key="1">
    <source>
        <dbReference type="HAMAP-Rule" id="MF_00110"/>
    </source>
</evidence>
<comment type="function">
    <text evidence="1">Catalyzes the conversion of 3-deoxy-D-arabino-heptulosonate 7-phosphate (DAHP) to dehydroquinate (DHQ).</text>
</comment>
<comment type="catalytic activity">
    <reaction evidence="1">
        <text>7-phospho-2-dehydro-3-deoxy-D-arabino-heptonate = 3-dehydroquinate + phosphate</text>
        <dbReference type="Rhea" id="RHEA:21968"/>
        <dbReference type="ChEBI" id="CHEBI:32364"/>
        <dbReference type="ChEBI" id="CHEBI:43474"/>
        <dbReference type="ChEBI" id="CHEBI:58394"/>
        <dbReference type="EC" id="4.2.3.4"/>
    </reaction>
</comment>
<comment type="cofactor">
    <cofactor evidence="1">
        <name>Co(2+)</name>
        <dbReference type="ChEBI" id="CHEBI:48828"/>
    </cofactor>
    <cofactor evidence="1">
        <name>Zn(2+)</name>
        <dbReference type="ChEBI" id="CHEBI:29105"/>
    </cofactor>
    <text evidence="1">Binds 1 divalent metal cation per subunit. Can use either Co(2+) or Zn(2+).</text>
</comment>
<comment type="cofactor">
    <cofactor evidence="1">
        <name>NAD(+)</name>
        <dbReference type="ChEBI" id="CHEBI:57540"/>
    </cofactor>
</comment>
<comment type="pathway">
    <text evidence="1">Metabolic intermediate biosynthesis; chorismate biosynthesis; chorismate from D-erythrose 4-phosphate and phosphoenolpyruvate: step 2/7.</text>
</comment>
<comment type="subcellular location">
    <subcellularLocation>
        <location evidence="1">Cytoplasm</location>
    </subcellularLocation>
</comment>
<comment type="similarity">
    <text evidence="1">Belongs to the sugar phosphate cyclases superfamily. Dehydroquinate synthase family.</text>
</comment>
<gene>
    <name evidence="1" type="primary">aroB</name>
    <name type="ordered locus">Bcen2424_0393</name>
</gene>
<reference key="1">
    <citation type="submission" date="2006-08" db="EMBL/GenBank/DDBJ databases">
        <title>Complete sequence of chromosome 1 of Burkholderia cenocepacia HI2424.</title>
        <authorList>
            <person name="Copeland A."/>
            <person name="Lucas S."/>
            <person name="Lapidus A."/>
            <person name="Barry K."/>
            <person name="Detter J.C."/>
            <person name="Glavina del Rio T."/>
            <person name="Hammon N."/>
            <person name="Israni S."/>
            <person name="Pitluck S."/>
            <person name="Chain P."/>
            <person name="Malfatti S."/>
            <person name="Shin M."/>
            <person name="Vergez L."/>
            <person name="Schmutz J."/>
            <person name="Larimer F."/>
            <person name="Land M."/>
            <person name="Hauser L."/>
            <person name="Kyrpides N."/>
            <person name="Kim E."/>
            <person name="LiPuma J.J."/>
            <person name="Gonzalez C.F."/>
            <person name="Konstantinidis K."/>
            <person name="Tiedje J.M."/>
            <person name="Richardson P."/>
        </authorList>
    </citation>
    <scope>NUCLEOTIDE SEQUENCE [LARGE SCALE GENOMIC DNA]</scope>
    <source>
        <strain>HI2424</strain>
    </source>
</reference>
<sequence>MITVNVDLGDRAYPIHIGAGLIGRTELFAPHIKGSSVTIVTNTTVDPLYGDALRAALAPLGKRVSTVVLPDGEAYKNWETLNLIFDGLLTDHADRKTTLVALGGGVVGDMTGFAAACYMRGVPFIQVPTTLLSQVDSSVGGKTGINHPLGKNMIGAFYQPQAVIADIGALTTLPDRELAAGVAEVIKTGAIADAGFFDWIEANVEALNRREPAALAHAVKRSCEIKASVVAADEREGGLRAILNFGHTFGHAIEAGLGYGEWLHGEAVGCGMVMAGDLSVRLGLLDEASRQRLDAVIAAAHLPTRGPALGDARYMDLMRVDKKAEAGAIKFILLKRFGDTLITQAPDEAVFATLAQTTR</sequence>
<keyword id="KW-0028">Amino-acid biosynthesis</keyword>
<keyword id="KW-0057">Aromatic amino acid biosynthesis</keyword>
<keyword id="KW-0170">Cobalt</keyword>
<keyword id="KW-0963">Cytoplasm</keyword>
<keyword id="KW-0456">Lyase</keyword>
<keyword id="KW-0479">Metal-binding</keyword>
<keyword id="KW-0520">NAD</keyword>
<keyword id="KW-0547">Nucleotide-binding</keyword>
<keyword id="KW-0862">Zinc</keyword>
<feature type="chain" id="PRO_1000094471" description="3-dehydroquinate synthase">
    <location>
        <begin position="1"/>
        <end position="359"/>
    </location>
</feature>
<feature type="binding site" evidence="1">
    <location>
        <begin position="71"/>
        <end position="76"/>
    </location>
    <ligand>
        <name>NAD(+)</name>
        <dbReference type="ChEBI" id="CHEBI:57540"/>
    </ligand>
</feature>
<feature type="binding site" evidence="1">
    <location>
        <begin position="105"/>
        <end position="109"/>
    </location>
    <ligand>
        <name>NAD(+)</name>
        <dbReference type="ChEBI" id="CHEBI:57540"/>
    </ligand>
</feature>
<feature type="binding site" evidence="1">
    <location>
        <begin position="129"/>
        <end position="130"/>
    </location>
    <ligand>
        <name>NAD(+)</name>
        <dbReference type="ChEBI" id="CHEBI:57540"/>
    </ligand>
</feature>
<feature type="binding site" evidence="1">
    <location>
        <position position="142"/>
    </location>
    <ligand>
        <name>NAD(+)</name>
        <dbReference type="ChEBI" id="CHEBI:57540"/>
    </ligand>
</feature>
<feature type="binding site" evidence="1">
    <location>
        <position position="151"/>
    </location>
    <ligand>
        <name>NAD(+)</name>
        <dbReference type="ChEBI" id="CHEBI:57540"/>
    </ligand>
</feature>
<feature type="binding site" evidence="1">
    <location>
        <position position="184"/>
    </location>
    <ligand>
        <name>Zn(2+)</name>
        <dbReference type="ChEBI" id="CHEBI:29105"/>
    </ligand>
</feature>
<feature type="binding site" evidence="1">
    <location>
        <position position="247"/>
    </location>
    <ligand>
        <name>Zn(2+)</name>
        <dbReference type="ChEBI" id="CHEBI:29105"/>
    </ligand>
</feature>
<feature type="binding site" evidence="1">
    <location>
        <position position="264"/>
    </location>
    <ligand>
        <name>Zn(2+)</name>
        <dbReference type="ChEBI" id="CHEBI:29105"/>
    </ligand>
</feature>
<organism>
    <name type="scientific">Burkholderia cenocepacia (strain HI2424)</name>
    <dbReference type="NCBI Taxonomy" id="331272"/>
    <lineage>
        <taxon>Bacteria</taxon>
        <taxon>Pseudomonadati</taxon>
        <taxon>Pseudomonadota</taxon>
        <taxon>Betaproteobacteria</taxon>
        <taxon>Burkholderiales</taxon>
        <taxon>Burkholderiaceae</taxon>
        <taxon>Burkholderia</taxon>
        <taxon>Burkholderia cepacia complex</taxon>
    </lineage>
</organism>
<accession>A0K3S0</accession>
<dbReference type="EC" id="4.2.3.4" evidence="1"/>
<dbReference type="EMBL" id="CP000458">
    <property type="protein sequence ID" value="ABK07147.1"/>
    <property type="molecule type" value="Genomic_DNA"/>
</dbReference>
<dbReference type="RefSeq" id="WP_006477158.1">
    <property type="nucleotide sequence ID" value="NC_008542.1"/>
</dbReference>
<dbReference type="SMR" id="A0K3S0"/>
<dbReference type="KEGG" id="bch:Bcen2424_0393"/>
<dbReference type="HOGENOM" id="CLU_001201_0_2_4"/>
<dbReference type="UniPathway" id="UPA00053">
    <property type="reaction ID" value="UER00085"/>
</dbReference>
<dbReference type="GO" id="GO:0005737">
    <property type="term" value="C:cytoplasm"/>
    <property type="evidence" value="ECO:0007669"/>
    <property type="project" value="UniProtKB-SubCell"/>
</dbReference>
<dbReference type="GO" id="GO:0003856">
    <property type="term" value="F:3-dehydroquinate synthase activity"/>
    <property type="evidence" value="ECO:0007669"/>
    <property type="project" value="UniProtKB-UniRule"/>
</dbReference>
<dbReference type="GO" id="GO:0046872">
    <property type="term" value="F:metal ion binding"/>
    <property type="evidence" value="ECO:0007669"/>
    <property type="project" value="UniProtKB-KW"/>
</dbReference>
<dbReference type="GO" id="GO:0000166">
    <property type="term" value="F:nucleotide binding"/>
    <property type="evidence" value="ECO:0007669"/>
    <property type="project" value="UniProtKB-KW"/>
</dbReference>
<dbReference type="GO" id="GO:0008652">
    <property type="term" value="P:amino acid biosynthetic process"/>
    <property type="evidence" value="ECO:0007669"/>
    <property type="project" value="UniProtKB-KW"/>
</dbReference>
<dbReference type="GO" id="GO:0009073">
    <property type="term" value="P:aromatic amino acid family biosynthetic process"/>
    <property type="evidence" value="ECO:0007669"/>
    <property type="project" value="UniProtKB-KW"/>
</dbReference>
<dbReference type="GO" id="GO:0009423">
    <property type="term" value="P:chorismate biosynthetic process"/>
    <property type="evidence" value="ECO:0007669"/>
    <property type="project" value="UniProtKB-UniRule"/>
</dbReference>
<dbReference type="CDD" id="cd08195">
    <property type="entry name" value="DHQS"/>
    <property type="match status" value="1"/>
</dbReference>
<dbReference type="FunFam" id="3.40.50.1970:FF:000001">
    <property type="entry name" value="3-dehydroquinate synthase"/>
    <property type="match status" value="1"/>
</dbReference>
<dbReference type="Gene3D" id="3.40.50.1970">
    <property type="match status" value="1"/>
</dbReference>
<dbReference type="Gene3D" id="1.20.1090.10">
    <property type="entry name" value="Dehydroquinate synthase-like - alpha domain"/>
    <property type="match status" value="1"/>
</dbReference>
<dbReference type="HAMAP" id="MF_00110">
    <property type="entry name" value="DHQ_synthase"/>
    <property type="match status" value="1"/>
</dbReference>
<dbReference type="InterPro" id="IPR050071">
    <property type="entry name" value="Dehydroquinate_synthase"/>
</dbReference>
<dbReference type="InterPro" id="IPR016037">
    <property type="entry name" value="DHQ_synth_AroB"/>
</dbReference>
<dbReference type="InterPro" id="IPR030963">
    <property type="entry name" value="DHQ_synth_fam"/>
</dbReference>
<dbReference type="InterPro" id="IPR030960">
    <property type="entry name" value="DHQS/DOIS_N"/>
</dbReference>
<dbReference type="InterPro" id="IPR056179">
    <property type="entry name" value="DHQS_C"/>
</dbReference>
<dbReference type="NCBIfam" id="TIGR01357">
    <property type="entry name" value="aroB"/>
    <property type="match status" value="1"/>
</dbReference>
<dbReference type="PANTHER" id="PTHR43622">
    <property type="entry name" value="3-DEHYDROQUINATE SYNTHASE"/>
    <property type="match status" value="1"/>
</dbReference>
<dbReference type="PANTHER" id="PTHR43622:SF7">
    <property type="entry name" value="3-DEHYDROQUINATE SYNTHASE, CHLOROPLASTIC"/>
    <property type="match status" value="1"/>
</dbReference>
<dbReference type="Pfam" id="PF01761">
    <property type="entry name" value="DHQ_synthase"/>
    <property type="match status" value="1"/>
</dbReference>
<dbReference type="Pfam" id="PF24621">
    <property type="entry name" value="DHQS_C"/>
    <property type="match status" value="1"/>
</dbReference>
<dbReference type="PIRSF" id="PIRSF001455">
    <property type="entry name" value="DHQ_synth"/>
    <property type="match status" value="1"/>
</dbReference>
<dbReference type="SUPFAM" id="SSF56796">
    <property type="entry name" value="Dehydroquinate synthase-like"/>
    <property type="match status" value="1"/>
</dbReference>
<protein>
    <recommendedName>
        <fullName evidence="1">3-dehydroquinate synthase</fullName>
        <shortName evidence="1">DHQS</shortName>
        <ecNumber evidence="1">4.2.3.4</ecNumber>
    </recommendedName>
</protein>
<name>AROB_BURCH</name>